<accession>A5IGQ8</accession>
<protein>
    <recommendedName>
        <fullName evidence="1">Large ribosomal subunit protein bL31</fullName>
    </recommendedName>
    <alternativeName>
        <fullName evidence="2">50S ribosomal protein L31</fullName>
    </alternativeName>
</protein>
<name>RL31_LEGPC</name>
<feature type="chain" id="PRO_1000126649" description="Large ribosomal subunit protein bL31">
    <location>
        <begin position="1"/>
        <end position="75"/>
    </location>
</feature>
<feature type="binding site" evidence="1">
    <location>
        <position position="16"/>
    </location>
    <ligand>
        <name>Zn(2+)</name>
        <dbReference type="ChEBI" id="CHEBI:29105"/>
    </ligand>
</feature>
<feature type="binding site" evidence="1">
    <location>
        <position position="18"/>
    </location>
    <ligand>
        <name>Zn(2+)</name>
        <dbReference type="ChEBI" id="CHEBI:29105"/>
    </ligand>
</feature>
<feature type="binding site" evidence="1">
    <location>
        <position position="37"/>
    </location>
    <ligand>
        <name>Zn(2+)</name>
        <dbReference type="ChEBI" id="CHEBI:29105"/>
    </ligand>
</feature>
<feature type="binding site" evidence="1">
    <location>
        <position position="40"/>
    </location>
    <ligand>
        <name>Zn(2+)</name>
        <dbReference type="ChEBI" id="CHEBI:29105"/>
    </ligand>
</feature>
<dbReference type="EMBL" id="CP000675">
    <property type="protein sequence ID" value="ABQ56558.1"/>
    <property type="molecule type" value="Genomic_DNA"/>
</dbReference>
<dbReference type="RefSeq" id="WP_010946387.1">
    <property type="nucleotide sequence ID" value="NZ_JAPMSS010000016.1"/>
</dbReference>
<dbReference type="SMR" id="A5IGQ8"/>
<dbReference type="GeneID" id="57034644"/>
<dbReference type="KEGG" id="lpc:LPC_2644"/>
<dbReference type="HOGENOM" id="CLU_114306_4_2_6"/>
<dbReference type="GO" id="GO:1990904">
    <property type="term" value="C:ribonucleoprotein complex"/>
    <property type="evidence" value="ECO:0007669"/>
    <property type="project" value="UniProtKB-KW"/>
</dbReference>
<dbReference type="GO" id="GO:0005840">
    <property type="term" value="C:ribosome"/>
    <property type="evidence" value="ECO:0007669"/>
    <property type="project" value="UniProtKB-KW"/>
</dbReference>
<dbReference type="GO" id="GO:0046872">
    <property type="term" value="F:metal ion binding"/>
    <property type="evidence" value="ECO:0007669"/>
    <property type="project" value="UniProtKB-KW"/>
</dbReference>
<dbReference type="GO" id="GO:0019843">
    <property type="term" value="F:rRNA binding"/>
    <property type="evidence" value="ECO:0007669"/>
    <property type="project" value="UniProtKB-KW"/>
</dbReference>
<dbReference type="GO" id="GO:0003735">
    <property type="term" value="F:structural constituent of ribosome"/>
    <property type="evidence" value="ECO:0007669"/>
    <property type="project" value="InterPro"/>
</dbReference>
<dbReference type="GO" id="GO:0006412">
    <property type="term" value="P:translation"/>
    <property type="evidence" value="ECO:0007669"/>
    <property type="project" value="UniProtKB-UniRule"/>
</dbReference>
<dbReference type="Gene3D" id="4.10.830.30">
    <property type="entry name" value="Ribosomal protein L31"/>
    <property type="match status" value="1"/>
</dbReference>
<dbReference type="HAMAP" id="MF_00501">
    <property type="entry name" value="Ribosomal_bL31_1"/>
    <property type="match status" value="1"/>
</dbReference>
<dbReference type="InterPro" id="IPR034704">
    <property type="entry name" value="Ribosomal_bL28/bL31-like_sf"/>
</dbReference>
<dbReference type="InterPro" id="IPR002150">
    <property type="entry name" value="Ribosomal_bL31"/>
</dbReference>
<dbReference type="InterPro" id="IPR027491">
    <property type="entry name" value="Ribosomal_bL31_A"/>
</dbReference>
<dbReference type="InterPro" id="IPR042105">
    <property type="entry name" value="Ribosomal_bL31_sf"/>
</dbReference>
<dbReference type="NCBIfam" id="TIGR00105">
    <property type="entry name" value="L31"/>
    <property type="match status" value="1"/>
</dbReference>
<dbReference type="NCBIfam" id="NF000612">
    <property type="entry name" value="PRK00019.1"/>
    <property type="match status" value="1"/>
</dbReference>
<dbReference type="NCBIfam" id="NF001809">
    <property type="entry name" value="PRK00528.1"/>
    <property type="match status" value="1"/>
</dbReference>
<dbReference type="PANTHER" id="PTHR33280">
    <property type="entry name" value="50S RIBOSOMAL PROTEIN L31, CHLOROPLASTIC"/>
    <property type="match status" value="1"/>
</dbReference>
<dbReference type="PANTHER" id="PTHR33280:SF6">
    <property type="entry name" value="LARGE RIBOSOMAL SUBUNIT PROTEIN BL31A"/>
    <property type="match status" value="1"/>
</dbReference>
<dbReference type="Pfam" id="PF01197">
    <property type="entry name" value="Ribosomal_L31"/>
    <property type="match status" value="1"/>
</dbReference>
<dbReference type="PRINTS" id="PR01249">
    <property type="entry name" value="RIBOSOMALL31"/>
</dbReference>
<dbReference type="SUPFAM" id="SSF143800">
    <property type="entry name" value="L28p-like"/>
    <property type="match status" value="1"/>
</dbReference>
<dbReference type="PROSITE" id="PS01143">
    <property type="entry name" value="RIBOSOMAL_L31"/>
    <property type="match status" value="1"/>
</dbReference>
<sequence>MKASVHPDYQTVKVTCSCGEVFETRSTLCKDLNIEVCSMCHPFYTGKQKLVDTGGRVQKFRDRYNMRTGQAKSKE</sequence>
<reference key="1">
    <citation type="submission" date="2006-11" db="EMBL/GenBank/DDBJ databases">
        <title>Identification and characterization of a new conjugation/ type IVA secretion system (trb/tra) of L. pneumophila Corby localized on a mobile genomic island.</title>
        <authorList>
            <person name="Gloeckner G."/>
            <person name="Albert-Weissenberger C."/>
            <person name="Weinmann E."/>
            <person name="Jacobi S."/>
            <person name="Schunder E."/>
            <person name="Steinert M."/>
            <person name="Buchrieser C."/>
            <person name="Hacker J."/>
            <person name="Heuner K."/>
        </authorList>
    </citation>
    <scope>NUCLEOTIDE SEQUENCE [LARGE SCALE GENOMIC DNA]</scope>
    <source>
        <strain>Corby</strain>
    </source>
</reference>
<keyword id="KW-0479">Metal-binding</keyword>
<keyword id="KW-0687">Ribonucleoprotein</keyword>
<keyword id="KW-0689">Ribosomal protein</keyword>
<keyword id="KW-0694">RNA-binding</keyword>
<keyword id="KW-0699">rRNA-binding</keyword>
<keyword id="KW-0862">Zinc</keyword>
<evidence type="ECO:0000255" key="1">
    <source>
        <dbReference type="HAMAP-Rule" id="MF_00501"/>
    </source>
</evidence>
<evidence type="ECO:0000305" key="2"/>
<comment type="function">
    <text evidence="1">Binds the 23S rRNA.</text>
</comment>
<comment type="cofactor">
    <cofactor evidence="1">
        <name>Zn(2+)</name>
        <dbReference type="ChEBI" id="CHEBI:29105"/>
    </cofactor>
    <text evidence="1">Binds 1 zinc ion per subunit.</text>
</comment>
<comment type="subunit">
    <text evidence="1">Part of the 50S ribosomal subunit.</text>
</comment>
<comment type="similarity">
    <text evidence="1">Belongs to the bacterial ribosomal protein bL31 family. Type A subfamily.</text>
</comment>
<gene>
    <name evidence="1" type="primary">rpmE</name>
    <name type="ordered locus">LPC_2644</name>
</gene>
<proteinExistence type="inferred from homology"/>
<organism>
    <name type="scientific">Legionella pneumophila (strain Corby)</name>
    <dbReference type="NCBI Taxonomy" id="400673"/>
    <lineage>
        <taxon>Bacteria</taxon>
        <taxon>Pseudomonadati</taxon>
        <taxon>Pseudomonadota</taxon>
        <taxon>Gammaproteobacteria</taxon>
        <taxon>Legionellales</taxon>
        <taxon>Legionellaceae</taxon>
        <taxon>Legionella</taxon>
    </lineage>
</organism>